<reference key="1">
    <citation type="journal article" date="1997" name="J. Bacteriol.">
        <title>Complete genome sequence of Methanobacterium thermoautotrophicum deltaH: functional analysis and comparative genomics.</title>
        <authorList>
            <person name="Smith D.R."/>
            <person name="Doucette-Stamm L.A."/>
            <person name="Deloughery C."/>
            <person name="Lee H.-M."/>
            <person name="Dubois J."/>
            <person name="Aldredge T."/>
            <person name="Bashirzadeh R."/>
            <person name="Blakely D."/>
            <person name="Cook R."/>
            <person name="Gilbert K."/>
            <person name="Harrison D."/>
            <person name="Hoang L."/>
            <person name="Keagle P."/>
            <person name="Lumm W."/>
            <person name="Pothier B."/>
            <person name="Qiu D."/>
            <person name="Spadafora R."/>
            <person name="Vicare R."/>
            <person name="Wang Y."/>
            <person name="Wierzbowski J."/>
            <person name="Gibson R."/>
            <person name="Jiwani N."/>
            <person name="Caruso A."/>
            <person name="Bush D."/>
            <person name="Safer H."/>
            <person name="Patwell D."/>
            <person name="Prabhakar S."/>
            <person name="McDougall S."/>
            <person name="Shimer G."/>
            <person name="Goyal A."/>
            <person name="Pietrovski S."/>
            <person name="Church G.M."/>
            <person name="Daniels C.J."/>
            <person name="Mao J.-I."/>
            <person name="Rice P."/>
            <person name="Noelling J."/>
            <person name="Reeve J.N."/>
        </authorList>
    </citation>
    <scope>NUCLEOTIDE SEQUENCE [LARGE SCALE GENOMIC DNA]</scope>
    <source>
        <strain>ATCC 29096 / DSM 1053 / JCM 10044 / NBRC 100330 / Delta H</strain>
    </source>
</reference>
<evidence type="ECO:0000250" key="1"/>
<evidence type="ECO:0000255" key="2">
    <source>
        <dbReference type="PROSITE-ProRule" id="PRU00434"/>
    </source>
</evidence>
<evidence type="ECO:0000305" key="3"/>
<accession>O26236</accession>
<comment type="function">
    <text evidence="1">Probably part of an ABC transporter complex. Responsible for energy coupling to the transport system (By similarity).</text>
</comment>
<comment type="subcellular location">
    <subcellularLocation>
        <location evidence="1">Cell membrane</location>
        <topology evidence="1">Peripheral membrane protein</topology>
    </subcellularLocation>
</comment>
<comment type="similarity">
    <text evidence="3">Belongs to the ABC transporter superfamily.</text>
</comment>
<dbReference type="EC" id="7.-.-.-"/>
<dbReference type="EMBL" id="AE000666">
    <property type="protein sequence ID" value="AAB84639.1"/>
    <property type="molecule type" value="Genomic_DNA"/>
</dbReference>
<dbReference type="PIR" id="G69043">
    <property type="entry name" value="G69043"/>
</dbReference>
<dbReference type="SMR" id="O26236"/>
<dbReference type="FunCoup" id="O26236">
    <property type="interactions" value="51"/>
</dbReference>
<dbReference type="STRING" id="187420.MTH_133"/>
<dbReference type="PaxDb" id="187420-MTH_133"/>
<dbReference type="EnsemblBacteria" id="AAB84639">
    <property type="protein sequence ID" value="AAB84639"/>
    <property type="gene ID" value="MTH_133"/>
</dbReference>
<dbReference type="KEGG" id="mth:MTH_133"/>
<dbReference type="PATRIC" id="fig|187420.15.peg.106"/>
<dbReference type="HOGENOM" id="CLU_000604_1_22_2"/>
<dbReference type="InParanoid" id="O26236"/>
<dbReference type="Proteomes" id="UP000005223">
    <property type="component" value="Chromosome"/>
</dbReference>
<dbReference type="GO" id="GO:0043190">
    <property type="term" value="C:ATP-binding cassette (ABC) transporter complex"/>
    <property type="evidence" value="ECO:0007669"/>
    <property type="project" value="TreeGrafter"/>
</dbReference>
<dbReference type="GO" id="GO:0005524">
    <property type="term" value="F:ATP binding"/>
    <property type="evidence" value="ECO:0007669"/>
    <property type="project" value="UniProtKB-KW"/>
</dbReference>
<dbReference type="GO" id="GO:0016887">
    <property type="term" value="F:ATP hydrolysis activity"/>
    <property type="evidence" value="ECO:0007669"/>
    <property type="project" value="InterPro"/>
</dbReference>
<dbReference type="GO" id="GO:0042626">
    <property type="term" value="F:ATPase-coupled transmembrane transporter activity"/>
    <property type="evidence" value="ECO:0007669"/>
    <property type="project" value="TreeGrafter"/>
</dbReference>
<dbReference type="GO" id="GO:0006824">
    <property type="term" value="P:cobalt ion transport"/>
    <property type="evidence" value="ECO:0007669"/>
    <property type="project" value="InterPro"/>
</dbReference>
<dbReference type="CDD" id="cd03225">
    <property type="entry name" value="ABC_cobalt_CbiO_domain1"/>
    <property type="match status" value="1"/>
</dbReference>
<dbReference type="FunFam" id="3.40.50.300:FF:000224">
    <property type="entry name" value="Energy-coupling factor transporter ATP-binding protein EcfA"/>
    <property type="match status" value="1"/>
</dbReference>
<dbReference type="Gene3D" id="3.40.50.300">
    <property type="entry name" value="P-loop containing nucleotide triphosphate hydrolases"/>
    <property type="match status" value="1"/>
</dbReference>
<dbReference type="InterPro" id="IPR003593">
    <property type="entry name" value="AAA+_ATPase"/>
</dbReference>
<dbReference type="InterPro" id="IPR003439">
    <property type="entry name" value="ABC_transporter-like_ATP-bd"/>
</dbReference>
<dbReference type="InterPro" id="IPR017871">
    <property type="entry name" value="ABC_transporter-like_CS"/>
</dbReference>
<dbReference type="InterPro" id="IPR015856">
    <property type="entry name" value="ABC_transpr_CbiO/EcfA_su"/>
</dbReference>
<dbReference type="InterPro" id="IPR005876">
    <property type="entry name" value="Co_trans_ATP-bd"/>
</dbReference>
<dbReference type="InterPro" id="IPR050095">
    <property type="entry name" value="ECF_ABC_transporter_ATP-bd"/>
</dbReference>
<dbReference type="InterPro" id="IPR027417">
    <property type="entry name" value="P-loop_NTPase"/>
</dbReference>
<dbReference type="NCBIfam" id="TIGR01166">
    <property type="entry name" value="cbiO"/>
    <property type="match status" value="1"/>
</dbReference>
<dbReference type="PANTHER" id="PTHR43553:SF24">
    <property type="entry name" value="ENERGY-COUPLING FACTOR TRANSPORTER ATP-BINDING PROTEIN ECFA1"/>
    <property type="match status" value="1"/>
</dbReference>
<dbReference type="PANTHER" id="PTHR43553">
    <property type="entry name" value="HEAVY METAL TRANSPORTER"/>
    <property type="match status" value="1"/>
</dbReference>
<dbReference type="Pfam" id="PF00005">
    <property type="entry name" value="ABC_tran"/>
    <property type="match status" value="1"/>
</dbReference>
<dbReference type="SMART" id="SM00382">
    <property type="entry name" value="AAA"/>
    <property type="match status" value="1"/>
</dbReference>
<dbReference type="SUPFAM" id="SSF52540">
    <property type="entry name" value="P-loop containing nucleoside triphosphate hydrolases"/>
    <property type="match status" value="1"/>
</dbReference>
<dbReference type="PROSITE" id="PS00211">
    <property type="entry name" value="ABC_TRANSPORTER_1"/>
    <property type="match status" value="1"/>
</dbReference>
<dbReference type="PROSITE" id="PS50893">
    <property type="entry name" value="ABC_TRANSPORTER_2"/>
    <property type="match status" value="1"/>
</dbReference>
<gene>
    <name type="ordered locus">MTH_133</name>
</gene>
<organism>
    <name type="scientific">Methanothermobacter thermautotrophicus (strain ATCC 29096 / DSM 1053 / JCM 10044 / NBRC 100330 / Delta H)</name>
    <name type="common">Methanobacterium thermoautotrophicum</name>
    <dbReference type="NCBI Taxonomy" id="187420"/>
    <lineage>
        <taxon>Archaea</taxon>
        <taxon>Methanobacteriati</taxon>
        <taxon>Methanobacteriota</taxon>
        <taxon>Methanomada group</taxon>
        <taxon>Methanobacteria</taxon>
        <taxon>Methanobacteriales</taxon>
        <taxon>Methanobacteriaceae</taxon>
        <taxon>Methanothermobacter</taxon>
    </lineage>
</organism>
<name>Y133_METTH</name>
<protein>
    <recommendedName>
        <fullName>Putative ABC transporter ATP-binding protein MTH_133</fullName>
        <ecNumber>7.-.-.-</ecNumber>
    </recommendedName>
</protein>
<proteinExistence type="inferred from homology"/>
<sequence>MNMRIIEAVDIRYTYPDGTEALRGINFHAERGEVVALLGPNGAGKSTLFLHFNGILQPTSGKIMIDGEELDYSKSGLIKARQKVGIVFQNPDDQLFAPRVDEDVAFGPLNMGLSEDEVEERVRDALQKVGMLGYESKPPHHFSGGEKKRVAIAGIIAMKPDIMVLDEPTSGLDPRGASQILRLLHNLNEEGMTIIISTHDVDLAPLYSDRIYIISDGEIISTGAPSEVFSDIDTIRGANLRLPRIAHLVEILQKEDDLPFEEPYPLTIGEARRKLRNQLR</sequence>
<feature type="chain" id="PRO_0000092152" description="Putative ABC transporter ATP-binding protein MTH_133">
    <location>
        <begin position="1"/>
        <end position="280"/>
    </location>
</feature>
<feature type="domain" description="ABC transporter" evidence="2">
    <location>
        <begin position="6"/>
        <end position="241"/>
    </location>
</feature>
<feature type="binding site" evidence="2">
    <location>
        <begin position="39"/>
        <end position="46"/>
    </location>
    <ligand>
        <name>ATP</name>
        <dbReference type="ChEBI" id="CHEBI:30616"/>
    </ligand>
</feature>
<keyword id="KW-0067">ATP-binding</keyword>
<keyword id="KW-1003">Cell membrane</keyword>
<keyword id="KW-0472">Membrane</keyword>
<keyword id="KW-0547">Nucleotide-binding</keyword>
<keyword id="KW-1185">Reference proteome</keyword>
<keyword id="KW-1278">Translocase</keyword>
<keyword id="KW-0813">Transport</keyword>